<reference key="1">
    <citation type="journal article" date="2001" name="J. Bacteriol.">
        <title>Genome sequence and comparative analysis of the solvent-producing bacterium Clostridium acetobutylicum.</title>
        <authorList>
            <person name="Noelling J."/>
            <person name="Breton G."/>
            <person name="Omelchenko M.V."/>
            <person name="Makarova K.S."/>
            <person name="Zeng Q."/>
            <person name="Gibson R."/>
            <person name="Lee H.M."/>
            <person name="Dubois J."/>
            <person name="Qiu D."/>
            <person name="Hitti J."/>
            <person name="Wolf Y.I."/>
            <person name="Tatusov R.L."/>
            <person name="Sabathe F."/>
            <person name="Doucette-Stamm L.A."/>
            <person name="Soucaille P."/>
            <person name="Daly M.J."/>
            <person name="Bennett G.N."/>
            <person name="Koonin E.V."/>
            <person name="Smith D.R."/>
        </authorList>
    </citation>
    <scope>NUCLEOTIDE SEQUENCE [LARGE SCALE GENOMIC DNA]</scope>
    <source>
        <strain>ATCC 824 / DSM 792 / JCM 1419 / IAM 19013 / LMG 5710 / NBRC 13948 / NRRL B-527 / VKM B-1787 / 2291 / W</strain>
    </source>
</reference>
<sequence>MSVISMKQLLEAGVHFGHQTRRWNPKMAPYIFTERNGIYIIDLQKTVKKIDEAYNFIREVSEQGKDILFVGTKKQAQEAIAEESVRAGMHFVNNRWLGGMLTNFNTIKTRIAKLNGLKKMEEDGTFDVLPKKEVIILRNEEEKLVKNLGGIVNMTQSNIGALFVVDPRKEKNAISEAKILGIPVVAIVDTNCDPDEVDYVIPGNDDAIRAVRLITSKIADAIIEGRQGEQLAE</sequence>
<protein>
    <recommendedName>
        <fullName evidence="1">Small ribosomal subunit protein uS2</fullName>
    </recommendedName>
    <alternativeName>
        <fullName evidence="2">30S ribosomal protein S2</fullName>
    </alternativeName>
</protein>
<evidence type="ECO:0000255" key="1">
    <source>
        <dbReference type="HAMAP-Rule" id="MF_00291"/>
    </source>
</evidence>
<evidence type="ECO:0000305" key="2"/>
<gene>
    <name evidence="1" type="primary">rpsB</name>
    <name type="ordered locus">CA_C1787</name>
</gene>
<name>RS2_CLOAB</name>
<feature type="chain" id="PRO_0000134156" description="Small ribosomal subunit protein uS2">
    <location>
        <begin position="1"/>
        <end position="233"/>
    </location>
</feature>
<accession>Q97I66</accession>
<proteinExistence type="inferred from homology"/>
<keyword id="KW-1185">Reference proteome</keyword>
<keyword id="KW-0687">Ribonucleoprotein</keyword>
<keyword id="KW-0689">Ribosomal protein</keyword>
<dbReference type="EMBL" id="AE001437">
    <property type="protein sequence ID" value="AAK79752.1"/>
    <property type="molecule type" value="Genomic_DNA"/>
</dbReference>
<dbReference type="PIR" id="E97120">
    <property type="entry name" value="E97120"/>
</dbReference>
<dbReference type="RefSeq" id="NP_348412.1">
    <property type="nucleotide sequence ID" value="NC_003030.1"/>
</dbReference>
<dbReference type="RefSeq" id="WP_010965093.1">
    <property type="nucleotide sequence ID" value="NC_003030.1"/>
</dbReference>
<dbReference type="SMR" id="Q97I66"/>
<dbReference type="STRING" id="272562.CA_C1787"/>
<dbReference type="GeneID" id="44998281"/>
<dbReference type="KEGG" id="cac:CA_C1787"/>
<dbReference type="PATRIC" id="fig|272562.8.peg.1993"/>
<dbReference type="eggNOG" id="COG0052">
    <property type="taxonomic scope" value="Bacteria"/>
</dbReference>
<dbReference type="HOGENOM" id="CLU_040318_1_2_9"/>
<dbReference type="OrthoDB" id="9808036at2"/>
<dbReference type="Proteomes" id="UP000000814">
    <property type="component" value="Chromosome"/>
</dbReference>
<dbReference type="GO" id="GO:0022627">
    <property type="term" value="C:cytosolic small ribosomal subunit"/>
    <property type="evidence" value="ECO:0007669"/>
    <property type="project" value="TreeGrafter"/>
</dbReference>
<dbReference type="GO" id="GO:0003735">
    <property type="term" value="F:structural constituent of ribosome"/>
    <property type="evidence" value="ECO:0007669"/>
    <property type="project" value="InterPro"/>
</dbReference>
<dbReference type="GO" id="GO:0006412">
    <property type="term" value="P:translation"/>
    <property type="evidence" value="ECO:0007669"/>
    <property type="project" value="UniProtKB-UniRule"/>
</dbReference>
<dbReference type="CDD" id="cd01425">
    <property type="entry name" value="RPS2"/>
    <property type="match status" value="1"/>
</dbReference>
<dbReference type="FunFam" id="1.10.287.610:FF:000001">
    <property type="entry name" value="30S ribosomal protein S2"/>
    <property type="match status" value="1"/>
</dbReference>
<dbReference type="Gene3D" id="3.40.50.10490">
    <property type="entry name" value="Glucose-6-phosphate isomerase like protein, domain 1"/>
    <property type="match status" value="1"/>
</dbReference>
<dbReference type="Gene3D" id="1.10.287.610">
    <property type="entry name" value="Helix hairpin bin"/>
    <property type="match status" value="1"/>
</dbReference>
<dbReference type="HAMAP" id="MF_00291_B">
    <property type="entry name" value="Ribosomal_uS2_B"/>
    <property type="match status" value="1"/>
</dbReference>
<dbReference type="InterPro" id="IPR001865">
    <property type="entry name" value="Ribosomal_uS2"/>
</dbReference>
<dbReference type="InterPro" id="IPR005706">
    <property type="entry name" value="Ribosomal_uS2_bac/mit/plastid"/>
</dbReference>
<dbReference type="InterPro" id="IPR018130">
    <property type="entry name" value="Ribosomal_uS2_CS"/>
</dbReference>
<dbReference type="InterPro" id="IPR023591">
    <property type="entry name" value="Ribosomal_uS2_flav_dom_sf"/>
</dbReference>
<dbReference type="NCBIfam" id="TIGR01011">
    <property type="entry name" value="rpsB_bact"/>
    <property type="match status" value="1"/>
</dbReference>
<dbReference type="PANTHER" id="PTHR12534">
    <property type="entry name" value="30S RIBOSOMAL PROTEIN S2 PROKARYOTIC AND ORGANELLAR"/>
    <property type="match status" value="1"/>
</dbReference>
<dbReference type="PANTHER" id="PTHR12534:SF0">
    <property type="entry name" value="SMALL RIBOSOMAL SUBUNIT PROTEIN US2M"/>
    <property type="match status" value="1"/>
</dbReference>
<dbReference type="Pfam" id="PF00318">
    <property type="entry name" value="Ribosomal_S2"/>
    <property type="match status" value="1"/>
</dbReference>
<dbReference type="PRINTS" id="PR00395">
    <property type="entry name" value="RIBOSOMALS2"/>
</dbReference>
<dbReference type="SUPFAM" id="SSF52313">
    <property type="entry name" value="Ribosomal protein S2"/>
    <property type="match status" value="1"/>
</dbReference>
<dbReference type="PROSITE" id="PS00962">
    <property type="entry name" value="RIBOSOMAL_S2_1"/>
    <property type="match status" value="1"/>
</dbReference>
<comment type="similarity">
    <text evidence="1">Belongs to the universal ribosomal protein uS2 family.</text>
</comment>
<organism>
    <name type="scientific">Clostridium acetobutylicum (strain ATCC 824 / DSM 792 / JCM 1419 / IAM 19013 / LMG 5710 / NBRC 13948 / NRRL B-527 / VKM B-1787 / 2291 / W)</name>
    <dbReference type="NCBI Taxonomy" id="272562"/>
    <lineage>
        <taxon>Bacteria</taxon>
        <taxon>Bacillati</taxon>
        <taxon>Bacillota</taxon>
        <taxon>Clostridia</taxon>
        <taxon>Eubacteriales</taxon>
        <taxon>Clostridiaceae</taxon>
        <taxon>Clostridium</taxon>
    </lineage>
</organism>